<dbReference type="EC" id="3.6.1.73" evidence="1"/>
<dbReference type="EMBL" id="CP001014">
    <property type="protein sequence ID" value="ACB40774.1"/>
    <property type="molecule type" value="Genomic_DNA"/>
</dbReference>
<dbReference type="RefSeq" id="WP_012351193.1">
    <property type="nucleotide sequence ID" value="NC_010525.1"/>
</dbReference>
<dbReference type="SMR" id="B1YBH2"/>
<dbReference type="STRING" id="444157.Tneu_1859"/>
<dbReference type="GeneID" id="6164840"/>
<dbReference type="KEGG" id="tne:Tneu_1859"/>
<dbReference type="eggNOG" id="arCOG01221">
    <property type="taxonomic scope" value="Archaea"/>
</dbReference>
<dbReference type="HOGENOM" id="CLU_087417_0_1_2"/>
<dbReference type="OrthoDB" id="52857at2157"/>
<dbReference type="Proteomes" id="UP000001694">
    <property type="component" value="Chromosome"/>
</dbReference>
<dbReference type="GO" id="GO:0103023">
    <property type="term" value="F:ITPase activity"/>
    <property type="evidence" value="ECO:0007669"/>
    <property type="project" value="UniProtKB-EC"/>
</dbReference>
<dbReference type="GO" id="GO:0046872">
    <property type="term" value="F:metal ion binding"/>
    <property type="evidence" value="ECO:0007669"/>
    <property type="project" value="UniProtKB-KW"/>
</dbReference>
<dbReference type="GO" id="GO:0000166">
    <property type="term" value="F:nucleotide binding"/>
    <property type="evidence" value="ECO:0007669"/>
    <property type="project" value="UniProtKB-KW"/>
</dbReference>
<dbReference type="GO" id="GO:0017111">
    <property type="term" value="F:ribonucleoside triphosphate phosphatase activity"/>
    <property type="evidence" value="ECO:0000250"/>
    <property type="project" value="UniProtKB"/>
</dbReference>
<dbReference type="GO" id="GO:0009117">
    <property type="term" value="P:nucleotide metabolic process"/>
    <property type="evidence" value="ECO:0007669"/>
    <property type="project" value="UniProtKB-KW"/>
</dbReference>
<dbReference type="GO" id="GO:0006772">
    <property type="term" value="P:thiamine metabolic process"/>
    <property type="evidence" value="ECO:0007669"/>
    <property type="project" value="TreeGrafter"/>
</dbReference>
<dbReference type="FunFam" id="3.90.950.10:FF:000002">
    <property type="entry name" value="Inosine/xanthosine triphosphatase"/>
    <property type="match status" value="1"/>
</dbReference>
<dbReference type="Gene3D" id="3.90.950.10">
    <property type="match status" value="1"/>
</dbReference>
<dbReference type="HAMAP" id="MF_00648">
    <property type="entry name" value="Non_canon_purine_NTPase_YjjX"/>
    <property type="match status" value="1"/>
</dbReference>
<dbReference type="InterPro" id="IPR029001">
    <property type="entry name" value="ITPase-like_fam"/>
</dbReference>
<dbReference type="InterPro" id="IPR002786">
    <property type="entry name" value="Non_canon_purine_NTPase"/>
</dbReference>
<dbReference type="InterPro" id="IPR026533">
    <property type="entry name" value="NTPase/PRRC1"/>
</dbReference>
<dbReference type="InterPro" id="IPR050299">
    <property type="entry name" value="YjjX_NTPase"/>
</dbReference>
<dbReference type="NCBIfam" id="TIGR00258">
    <property type="entry name" value="inosine/xanthosine triphosphatase"/>
    <property type="match status" value="1"/>
</dbReference>
<dbReference type="PANTHER" id="PTHR34699">
    <property type="match status" value="1"/>
</dbReference>
<dbReference type="PANTHER" id="PTHR34699:SF2">
    <property type="entry name" value="NON-CANONICAL PURINE NTP PHOSPHATASE_PRRC1 DOMAIN-CONTAINING PROTEIN"/>
    <property type="match status" value="1"/>
</dbReference>
<dbReference type="Pfam" id="PF01931">
    <property type="entry name" value="NTPase_I-T"/>
    <property type="match status" value="1"/>
</dbReference>
<dbReference type="SUPFAM" id="SSF52972">
    <property type="entry name" value="ITPase-like"/>
    <property type="match status" value="1"/>
</dbReference>
<keyword id="KW-0378">Hydrolase</keyword>
<keyword id="KW-0460">Magnesium</keyword>
<keyword id="KW-0464">Manganese</keyword>
<keyword id="KW-0479">Metal-binding</keyword>
<keyword id="KW-0546">Nucleotide metabolism</keyword>
<keyword id="KW-0547">Nucleotide-binding</keyword>
<accession>B1YBH2</accession>
<name>NCPP_PYRNV</name>
<evidence type="ECO:0000255" key="1">
    <source>
        <dbReference type="HAMAP-Rule" id="MF_00648"/>
    </source>
</evidence>
<proteinExistence type="inferred from homology"/>
<gene>
    <name type="ordered locus">Tneu_1859</name>
</gene>
<sequence length="182" mass="18929">MKVAVASRNPNKVRAVEEAYRLFGIPARVSSVDKPPSLPPQPVGLEAVVAGAVERAKAALAAAGEAEHGVGIEAGALEAGGRHLDVTVAAVADRGGLVTLGFGPAFQIPDVFLGDVLRGVELGVLAERHFGKAAVGYREGIIGLLTRGRVTRLDLNVVAVAMALVPRLPANAQLYRFWKTAP</sequence>
<protein>
    <recommendedName>
        <fullName evidence="1">Probable inosine/xanthosine triphosphatase</fullName>
        <shortName evidence="1">ITPase/XTPase</shortName>
        <ecNumber evidence="1">3.6.1.73</ecNumber>
    </recommendedName>
    <alternativeName>
        <fullName evidence="1">Non-canonical purine NTP phosphatase</fullName>
    </alternativeName>
    <alternativeName>
        <fullName evidence="1">Non-standard purine NTP phosphatase</fullName>
    </alternativeName>
    <alternativeName>
        <fullName evidence="1">Nucleoside-triphosphate phosphatase</fullName>
        <shortName evidence="1">NTPase</shortName>
    </alternativeName>
</protein>
<reference key="1">
    <citation type="submission" date="2008-03" db="EMBL/GenBank/DDBJ databases">
        <title>Complete sequence of Thermoproteus neutrophilus V24Sta.</title>
        <authorList>
            <consortium name="US DOE Joint Genome Institute"/>
            <person name="Copeland A."/>
            <person name="Lucas S."/>
            <person name="Lapidus A."/>
            <person name="Glavina del Rio T."/>
            <person name="Dalin E."/>
            <person name="Tice H."/>
            <person name="Bruce D."/>
            <person name="Goodwin L."/>
            <person name="Pitluck S."/>
            <person name="Sims D."/>
            <person name="Brettin T."/>
            <person name="Detter J.C."/>
            <person name="Han C."/>
            <person name="Kuske C.R."/>
            <person name="Schmutz J."/>
            <person name="Larimer F."/>
            <person name="Land M."/>
            <person name="Hauser L."/>
            <person name="Kyrpides N."/>
            <person name="Mikhailova N."/>
            <person name="Biddle J.F."/>
            <person name="Zhang Z."/>
            <person name="Fitz-Gibbon S.T."/>
            <person name="Lowe T.M."/>
            <person name="Saltikov C."/>
            <person name="House C.H."/>
            <person name="Richardson P."/>
        </authorList>
    </citation>
    <scope>NUCLEOTIDE SEQUENCE [LARGE SCALE GENOMIC DNA]</scope>
    <source>
        <strain>DSM 2338 / JCM 9278 / NBRC 100436 / V24Sta</strain>
    </source>
</reference>
<feature type="chain" id="PRO_1000130950" description="Probable inosine/xanthosine triphosphatase">
    <location>
        <begin position="1"/>
        <end position="182"/>
    </location>
</feature>
<feature type="binding site" evidence="1">
    <location>
        <begin position="65"/>
        <end position="66"/>
    </location>
    <ligand>
        <name>substrate</name>
    </ligand>
</feature>
<feature type="binding site" evidence="1">
    <location>
        <position position="65"/>
    </location>
    <ligand>
        <name>Mg(2+)</name>
        <dbReference type="ChEBI" id="CHEBI:18420"/>
    </ligand>
</feature>
<comment type="function">
    <text evidence="1">Phosphatase that hydrolyzes non-canonical purine nucleotides such as XTP and ITP to their respective diphosphate derivatives. Probably excludes non-canonical purines from DNA/RNA precursor pool, thus preventing their incorporation into DNA/RNA and avoiding chromosomal lesions.</text>
</comment>
<comment type="catalytic activity">
    <reaction evidence="1">
        <text>XTP + H2O = XDP + phosphate + H(+)</text>
        <dbReference type="Rhea" id="RHEA:28406"/>
        <dbReference type="ChEBI" id="CHEBI:15377"/>
        <dbReference type="ChEBI" id="CHEBI:15378"/>
        <dbReference type="ChEBI" id="CHEBI:43474"/>
        <dbReference type="ChEBI" id="CHEBI:59884"/>
        <dbReference type="ChEBI" id="CHEBI:61314"/>
        <dbReference type="EC" id="3.6.1.73"/>
    </reaction>
</comment>
<comment type="catalytic activity">
    <reaction evidence="1">
        <text>ITP + H2O = IDP + phosphate + H(+)</text>
        <dbReference type="Rhea" id="RHEA:28330"/>
        <dbReference type="ChEBI" id="CHEBI:15377"/>
        <dbReference type="ChEBI" id="CHEBI:15378"/>
        <dbReference type="ChEBI" id="CHEBI:43474"/>
        <dbReference type="ChEBI" id="CHEBI:58280"/>
        <dbReference type="ChEBI" id="CHEBI:61402"/>
        <dbReference type="EC" id="3.6.1.73"/>
    </reaction>
</comment>
<comment type="cofactor">
    <cofactor evidence="1">
        <name>Mg(2+)</name>
        <dbReference type="ChEBI" id="CHEBI:18420"/>
    </cofactor>
    <cofactor evidence="1">
        <name>Mn(2+)</name>
        <dbReference type="ChEBI" id="CHEBI:29035"/>
    </cofactor>
    <text evidence="1">Binds 1 divalent metal cation per subunit; can use either Mg(2+) or Mn(2+).</text>
</comment>
<comment type="subunit">
    <text evidence="1">Homodimer.</text>
</comment>
<comment type="similarity">
    <text evidence="1">Belongs to the YjjX NTPase family.</text>
</comment>
<organism>
    <name type="scientific">Pyrobaculum neutrophilum (strain DSM 2338 / JCM 9278 / NBRC 100436 / V24Sta)</name>
    <name type="common">Thermoproteus neutrophilus</name>
    <dbReference type="NCBI Taxonomy" id="444157"/>
    <lineage>
        <taxon>Archaea</taxon>
        <taxon>Thermoproteota</taxon>
        <taxon>Thermoprotei</taxon>
        <taxon>Thermoproteales</taxon>
        <taxon>Thermoproteaceae</taxon>
        <taxon>Pyrobaculum</taxon>
    </lineage>
</organism>